<sequence length="155" mass="16694">MLTLSGWITTQVPPSSRAAADAKAARTGTAEQAEDPAAGTDAADQHVQLSQAGRELAATMGVPVEEEDEDIPQELRPMVKMIRELKKKIEEKLRELQEAMRSSDPGAKEARVPELQKELQQLNSALQTATAAMASAIKEMGISDPALIMKVMGSR</sequence>
<feature type="chain" id="PRO_0000206250" description="Uncharacterized protein PA1545">
    <location>
        <begin position="1"/>
        <end position="155"/>
    </location>
</feature>
<feature type="region of interest" description="Disordered" evidence="1">
    <location>
        <begin position="1"/>
        <end position="44"/>
    </location>
</feature>
<feature type="compositionally biased region" description="Polar residues" evidence="1">
    <location>
        <begin position="1"/>
        <end position="14"/>
    </location>
</feature>
<feature type="compositionally biased region" description="Low complexity" evidence="1">
    <location>
        <begin position="17"/>
        <end position="30"/>
    </location>
</feature>
<gene>
    <name type="ordered locus">PA1545</name>
</gene>
<dbReference type="EMBL" id="M98276">
    <property type="protein sequence ID" value="AAA25712.1"/>
    <property type="molecule type" value="Genomic_DNA"/>
</dbReference>
<dbReference type="EMBL" id="X57736">
    <property type="protein sequence ID" value="CAA40905.1"/>
    <property type="molecule type" value="Genomic_DNA"/>
</dbReference>
<dbReference type="EMBL" id="X97981">
    <property type="protein sequence ID" value="CAA66618.1"/>
    <property type="molecule type" value="Genomic_DNA"/>
</dbReference>
<dbReference type="EMBL" id="AE004091">
    <property type="protein sequence ID" value="AAG04934.1"/>
    <property type="molecule type" value="Genomic_DNA"/>
</dbReference>
<dbReference type="PIR" id="H83453">
    <property type="entry name" value="H83453"/>
</dbReference>
<dbReference type="RefSeq" id="NP_250236.1">
    <property type="nucleotide sequence ID" value="NC_002516.2"/>
</dbReference>
<dbReference type="RefSeq" id="WP_003114670.1">
    <property type="nucleotide sequence ID" value="NZ_QZGE01000032.1"/>
</dbReference>
<dbReference type="SMR" id="Q04628"/>
<dbReference type="STRING" id="208964.PA1545"/>
<dbReference type="PaxDb" id="208964-PA1545"/>
<dbReference type="DNASU" id="883044"/>
<dbReference type="GeneID" id="883044"/>
<dbReference type="KEGG" id="pae:PA1545"/>
<dbReference type="PATRIC" id="fig|208964.12.peg.1598"/>
<dbReference type="PseudoCAP" id="PA1545"/>
<dbReference type="HOGENOM" id="CLU_1693953_0_0_6"/>
<dbReference type="InParanoid" id="Q04628"/>
<dbReference type="BioCyc" id="PAER208964:G1FZ6-1573-MONOMER"/>
<dbReference type="Proteomes" id="UP000002438">
    <property type="component" value="Chromosome"/>
</dbReference>
<dbReference type="Gene3D" id="1.20.120.1490">
    <property type="match status" value="1"/>
</dbReference>
<proteinExistence type="predicted"/>
<accession>Q04628</accession>
<evidence type="ECO:0000256" key="1">
    <source>
        <dbReference type="SAM" id="MobiDB-lite"/>
    </source>
</evidence>
<keyword id="KW-1185">Reference proteome</keyword>
<reference key="1">
    <citation type="submission" date="1993-01" db="EMBL/GenBank/DDBJ databases">
        <title>RpoN-independent promoters having a conserved GG-N10-GC motif in Pseudomonas aeruginosa.</title>
        <authorList>
            <person name="Savioz A."/>
            <person name="Zimmermann A."/>
            <person name="Haas D."/>
        </authorList>
    </citation>
    <scope>NUCLEOTIDE SEQUENCE [GENOMIC DNA]</scope>
    <source>
        <strain>ATCC 15692 / DSM 22644 / CIP 104116 / JCM 14847 / LMG 12228 / 1C / PRS 101 / PAO1</strain>
    </source>
</reference>
<reference key="2">
    <citation type="submission" date="1996-08" db="EMBL/GenBank/DDBJ databases">
        <authorList>
            <person name="Hungerer C."/>
            <person name="Troup B."/>
            <person name="Raemling U."/>
            <person name="Jahn D."/>
        </authorList>
    </citation>
    <scope>NUCLEOTIDE SEQUENCE [GENOMIC DNA]</scope>
    <source>
        <strain>ATCC 15692 / DSM 22644 / CIP 104116 / JCM 14847 / LMG 12228 / 1C / PRS 101 / PAO1</strain>
    </source>
</reference>
<reference key="3">
    <citation type="journal article" date="2000" name="Nature">
        <title>Complete genome sequence of Pseudomonas aeruginosa PAO1, an opportunistic pathogen.</title>
        <authorList>
            <person name="Stover C.K."/>
            <person name="Pham X.-Q.T."/>
            <person name="Erwin A.L."/>
            <person name="Mizoguchi S.D."/>
            <person name="Warrener P."/>
            <person name="Hickey M.J."/>
            <person name="Brinkman F.S.L."/>
            <person name="Hufnagle W.O."/>
            <person name="Kowalik D.J."/>
            <person name="Lagrou M."/>
            <person name="Garber R.L."/>
            <person name="Goltry L."/>
            <person name="Tolentino E."/>
            <person name="Westbrock-Wadman S."/>
            <person name="Yuan Y."/>
            <person name="Brody L.L."/>
            <person name="Coulter S.N."/>
            <person name="Folger K.R."/>
            <person name="Kas A."/>
            <person name="Larbig K."/>
            <person name="Lim R.M."/>
            <person name="Smith K.A."/>
            <person name="Spencer D.H."/>
            <person name="Wong G.K.-S."/>
            <person name="Wu Z."/>
            <person name="Paulsen I.T."/>
            <person name="Reizer J."/>
            <person name="Saier M.H. Jr."/>
            <person name="Hancock R.E.W."/>
            <person name="Lory S."/>
            <person name="Olson M.V."/>
        </authorList>
    </citation>
    <scope>NUCLEOTIDE SEQUENCE [LARGE SCALE GENOMIC DNA]</scope>
    <source>
        <strain>ATCC 15692 / DSM 22644 / CIP 104116 / JCM 14847 / LMG 12228 / 1C / PRS 101 / PAO1</strain>
    </source>
</reference>
<name>Y1545_PSEAE</name>
<protein>
    <recommendedName>
        <fullName>Uncharacterized protein PA1545</fullName>
    </recommendedName>
</protein>
<organism>
    <name type="scientific">Pseudomonas aeruginosa (strain ATCC 15692 / DSM 22644 / CIP 104116 / JCM 14847 / LMG 12228 / 1C / PRS 101 / PAO1)</name>
    <dbReference type="NCBI Taxonomy" id="208964"/>
    <lineage>
        <taxon>Bacteria</taxon>
        <taxon>Pseudomonadati</taxon>
        <taxon>Pseudomonadota</taxon>
        <taxon>Gammaproteobacteria</taxon>
        <taxon>Pseudomonadales</taxon>
        <taxon>Pseudomonadaceae</taxon>
        <taxon>Pseudomonas</taxon>
    </lineage>
</organism>